<protein>
    <recommendedName>
        <fullName evidence="6">Multidrug resistance protein 4</fullName>
        <ecNumber evidence="1">7.6.2.2</ecNumber>
    </recommendedName>
    <alternativeName>
        <fullName evidence="6">P-glycoprotein</fullName>
    </alternativeName>
</protein>
<sequence length="1310" mass="145344">MSVTTNAVADAFAVFDVTPDPDELARKNKKPDDSGSVTVRQLYRYANWLDLILLAVGIFGSIGCGVLTPCQMLVMGDMVDTFNTNDLMKAFPNQEAMYDPKYYIPFNHEVTKTVADTINDLVLKMVCFAIGSGVGSFLMTFCFFVMSERQGIKIRMLYFRALLRQDAGWYDFHESGELTSRIASDVQQIQDGMSQKFGIIFQTTTSFIAGYAIGFAKDWDLTLVIMSMSPFIVLSMTLLAVFATKFTVLGEESLGNAGAIAEATIGNMRTVHSLGQEHEFCEMYNEKIRVVDRYNVLKGLTVGLGLGAVMFFIMGAFSLGSWYASVVLRGKGGKKNVTAGDVMIVFICVLIATQGLSIIAIPLNIFATAKASAYRIYQTIDRIPDIDCRSTAGECPTECNGNITLEDVQFRYPTRPTKQILGGLDLEIKKGQTVALVGASGCGKSTTIQLVQRNYDPVGGSVKLDGKDLRDLNIKWLRNQIGLVGQEPILFACTIRENIMLGARDGETPTEEEMIECAKMANAHEFISHLPEGYDTMVGEKGAALSGGQKQRIAIARALIRKPTILLLDEATSALDTQSEKIVQQALEKASQGRTTIVVAHRLTTVRNASRICVFHQGEIIEQGTHQELMDLKGTYYGLVKRQSMEEEVDQETVENDLKKIREQENKEAEEINQHKNTDTNEDPDIVQKLENEYNSEMKKLKHSNRFVLLRVILDNFRHEWFLSTFGFIGGIGGGAIFPFFTLKIVDLIMCLLSINSDTLTDDQKDTIKNICIIVVVIGVASFLSFFMYIGLFLSAGFKMIGRVRKDMYHSIMHQNISWFDRKENMVGSLTTRLASDPTTLQGISGERVGNVIHIISTIGFALGIAFYYDWKVSLAVMAVSPVLIVVVFINGKLNSLEACPAQAAYEKSGITLVEAVESVRTVQSLTREEHFYEVFKDALREPKIGIYKWAPLLSIFMCLTTLLTQVMNPYGFYIGTYLIKKKSNYDLPVPDFMIEFSDRFEEMQKAIMAVIFAAQAVGNLGNIVPDIGKAVRAAKNTYDVIDRKPTIDCYSEEGETFNDVKGEIEFKDICFRYPTRPDNSVLKGISFKVEQGKTVALVGASGCGKSTSVQLIERFYDPTHGDVLLDGHNIKDLNIHFLRSQIGMVGQEPVLFAESVMDNIRRGVPKGVEVSNEQIYAAAKMANAHDFISAMPEGYNTMVGDRGAQISGGQKQRIAIARALIRNPKVLLLDEATSALDSESEKIVQDALDKAAKGRTTIVIAHRLSTIQNADQICVIMRGRIAERGTHQELLDLKGFYYTLAMQQFGTVD</sequence>
<keyword id="KW-0067">ATP-binding</keyword>
<keyword id="KW-0325">Glycoprotein</keyword>
<keyword id="KW-0472">Membrane</keyword>
<keyword id="KW-0547">Nucleotide-binding</keyword>
<keyword id="KW-1185">Reference proteome</keyword>
<keyword id="KW-0677">Repeat</keyword>
<keyword id="KW-1278">Translocase</keyword>
<keyword id="KW-0812">Transmembrane</keyword>
<keyword id="KW-1133">Transmembrane helix</keyword>
<keyword id="KW-0813">Transport</keyword>
<feature type="chain" id="PRO_0000093374" description="Multidrug resistance protein 4">
    <location>
        <begin position="1"/>
        <end position="1310"/>
    </location>
</feature>
<feature type="transmembrane region" description="Helical" evidence="4">
    <location>
        <begin position="48"/>
        <end position="68"/>
    </location>
</feature>
<feature type="transmembrane region" description="Helical" evidence="4">
    <location>
        <begin position="125"/>
        <end position="145"/>
    </location>
</feature>
<feature type="transmembrane region" description="Helical" evidence="4">
    <location>
        <begin position="196"/>
        <end position="216"/>
    </location>
</feature>
<feature type="transmembrane region" description="Helical" evidence="4">
    <location>
        <begin position="223"/>
        <end position="243"/>
    </location>
</feature>
<feature type="transmembrane region" description="Helical" evidence="4">
    <location>
        <begin position="299"/>
        <end position="319"/>
    </location>
</feature>
<feature type="transmembrane region" description="Helical" evidence="4">
    <location>
        <begin position="342"/>
        <end position="362"/>
    </location>
</feature>
<feature type="transmembrane region" description="Helical" evidence="4">
    <location>
        <begin position="721"/>
        <end position="741"/>
    </location>
</feature>
<feature type="transmembrane region" description="Helical" evidence="4">
    <location>
        <begin position="773"/>
        <end position="793"/>
    </location>
</feature>
<feature type="transmembrane region" description="Helical" evidence="4">
    <location>
        <begin position="849"/>
        <end position="869"/>
    </location>
</feature>
<feature type="transmembrane region" description="Helical" evidence="4">
    <location>
        <begin position="871"/>
        <end position="891"/>
    </location>
</feature>
<feature type="transmembrane region" description="Helical" evidence="4">
    <location>
        <begin position="945"/>
        <end position="965"/>
    </location>
</feature>
<feature type="domain" description="ABC transmembrane type-1 1" evidence="4">
    <location>
        <begin position="55"/>
        <end position="368"/>
    </location>
</feature>
<feature type="domain" description="ABC transporter 1" evidence="3">
    <location>
        <begin position="403"/>
        <end position="642"/>
    </location>
</feature>
<feature type="domain" description="ABC transmembrane type-1 2" evidence="4">
    <location>
        <begin position="722"/>
        <end position="1030"/>
    </location>
</feature>
<feature type="domain" description="ABC transporter 2" evidence="3">
    <location>
        <begin position="1065"/>
        <end position="1304"/>
    </location>
</feature>
<feature type="binding site" evidence="3">
    <location>
        <begin position="438"/>
        <end position="445"/>
    </location>
    <ligand>
        <name>ATP</name>
        <dbReference type="ChEBI" id="CHEBI:30616"/>
    </ligand>
</feature>
<feature type="binding site" evidence="3">
    <location>
        <begin position="1100"/>
        <end position="1107"/>
    </location>
    <ligand>
        <name>ATP</name>
        <dbReference type="ChEBI" id="CHEBI:30616"/>
    </ligand>
</feature>
<feature type="glycosylation site" description="N-linked (GlcNAc...) asparagine" evidence="5">
    <location>
        <position position="336"/>
    </location>
</feature>
<feature type="glycosylation site" description="N-linked (GlcNAc...) asparagine" evidence="5">
    <location>
        <position position="402"/>
    </location>
</feature>
<feature type="glycosylation site" description="N-linked (GlcNAc...) asparagine" evidence="5">
    <location>
        <position position="608"/>
    </location>
</feature>
<feature type="glycosylation site" description="N-linked (GlcNAc...) asparagine" evidence="5">
    <location>
        <position position="816"/>
    </location>
</feature>
<feature type="sequence conflict" description="In Ref. 2; AAA29109." evidence="7" ref="2">
    <original>KDLNIH</original>
    <variation>RFEYS</variation>
    <location>
        <begin position="1132"/>
        <end position="1137"/>
    </location>
</feature>
<name>MDR4_ENTH1</name>
<comment type="function">
    <text evidence="1">Energy-dependent efflux pump responsible for decreased drug accumulation in multidrug resistance parasites.</text>
</comment>
<comment type="catalytic activity">
    <reaction evidence="1">
        <text>ATP + H2O + xenobioticSide 1 = ADP + phosphate + xenobioticSide 2.</text>
        <dbReference type="EC" id="7.6.2.2"/>
    </reaction>
</comment>
<comment type="subcellular location">
    <subcellularLocation>
        <location evidence="2">Membrane</location>
        <topology evidence="2">Multi-pass membrane protein</topology>
    </subcellularLocation>
</comment>
<comment type="similarity">
    <text evidence="7">Belongs to the ABC transporter superfamily. ABCB family. Multidrug resistance exporter (TC 3.A.1.201) subfamily.</text>
</comment>
<accession>P16877</accession>
<accession>A0A175JGY0</accession>
<accession>C4LVN6</accession>
<reference evidence="9" key="1">
    <citation type="journal article" date="2005" name="Nature">
        <title>The genome of the protist parasite Entamoeba histolytica.</title>
        <authorList>
            <person name="Loftus B.J."/>
            <person name="Anderson I."/>
            <person name="Davies R."/>
            <person name="Alsmark U.C."/>
            <person name="Samuelson J."/>
            <person name="Amedeo P."/>
            <person name="Roncaglia P."/>
            <person name="Berriman M."/>
            <person name="Hirt R.P."/>
            <person name="Mann B.J."/>
            <person name="Nozaki T."/>
            <person name="Suh B."/>
            <person name="Pop M."/>
            <person name="Duchene M."/>
            <person name="Ackers J."/>
            <person name="Tannich E."/>
            <person name="Leippe M."/>
            <person name="Hofer M."/>
            <person name="Bruchhaus I."/>
            <person name="Willhoeft U."/>
            <person name="Bhattacharya A."/>
            <person name="Chillingworth T."/>
            <person name="Churcher C.M."/>
            <person name="Hance Z."/>
            <person name="Harris B."/>
            <person name="Harris D."/>
            <person name="Jagels K."/>
            <person name="Moule S."/>
            <person name="Mungall K.L."/>
            <person name="Ormond D."/>
            <person name="Squares R."/>
            <person name="Whitehead S."/>
            <person name="Quail M.A."/>
            <person name="Rabbinowitsch E."/>
            <person name="Norbertczak H."/>
            <person name="Price C."/>
            <person name="Wang Z."/>
            <person name="Guillen N."/>
            <person name="Gilchrist C."/>
            <person name="Stroup S.E."/>
            <person name="Bhattacharya S."/>
            <person name="Lohia A."/>
            <person name="Foster P.G."/>
            <person name="Sicheritz-Ponten T."/>
            <person name="Weber C."/>
            <person name="Singh U."/>
            <person name="Mukherjee C."/>
            <person name="El-Sayed N.M.A."/>
            <person name="Petri W.A."/>
            <person name="Clark C.G."/>
            <person name="Embley T.M."/>
            <person name="Barrell B.G."/>
            <person name="Fraser C.M."/>
            <person name="Hall N."/>
        </authorList>
    </citation>
    <scope>NUCLEOTIDE SEQUENCE [LARGE SCALE GENOMIC DNA]</scope>
    <source>
        <strain evidence="9">ATCC 30459 / HM-1:IMSS / ABRM</strain>
    </source>
</reference>
<reference evidence="8" key="2">
    <citation type="journal article" date="1990" name="Mol. Biochem. Parasitol.">
        <title>Emetine-resistant mutants of Entamoeba histolytica overexpress mRNAs for multidrug resistance.</title>
        <authorList>
            <person name="Samuelson J."/>
            <person name="Ayala P."/>
            <person name="Orozco E."/>
            <person name="Wirth D."/>
        </authorList>
    </citation>
    <scope>NUCLEOTIDE SEQUENCE [GENOMIC DNA] OF 1102-1216</scope>
    <source>
        <strain evidence="8">ATCC 30459 / HM-1:IMSS / ABRM</strain>
    </source>
</reference>
<gene>
    <name evidence="6" type="primary">MDR4</name>
    <name evidence="9" type="ORF">EHI_186350</name>
</gene>
<proteinExistence type="inferred from homology"/>
<organism evidence="9">
    <name type="scientific">Entamoeba histolytica (strain ATCC 30459 / HM-1:IMSS / ABRM)</name>
    <dbReference type="NCBI Taxonomy" id="294381"/>
    <lineage>
        <taxon>Eukaryota</taxon>
        <taxon>Amoebozoa</taxon>
        <taxon>Evosea</taxon>
        <taxon>Archamoebae</taxon>
        <taxon>Mastigamoebida</taxon>
        <taxon>Entamoebidae</taxon>
        <taxon>Entamoeba</taxon>
    </lineage>
</organism>
<evidence type="ECO:0000250" key="1">
    <source>
        <dbReference type="UniProtKB" id="P08183"/>
    </source>
</evidence>
<evidence type="ECO:0000255" key="2"/>
<evidence type="ECO:0000255" key="3">
    <source>
        <dbReference type="PROSITE-ProRule" id="PRU00434"/>
    </source>
</evidence>
<evidence type="ECO:0000255" key="4">
    <source>
        <dbReference type="PROSITE-ProRule" id="PRU00441"/>
    </source>
</evidence>
<evidence type="ECO:0000255" key="5">
    <source>
        <dbReference type="PROSITE-ProRule" id="PRU00498"/>
    </source>
</evidence>
<evidence type="ECO:0000303" key="6">
    <source>
    </source>
</evidence>
<evidence type="ECO:0000305" key="7"/>
<evidence type="ECO:0000312" key="8">
    <source>
        <dbReference type="EMBL" id="AAA29109.1"/>
    </source>
</evidence>
<evidence type="ECO:0000312" key="9">
    <source>
        <dbReference type="EMBL" id="EAL43317.1"/>
    </source>
</evidence>
<dbReference type="EC" id="7.6.2.2" evidence="1"/>
<dbReference type="EMBL" id="DS571159">
    <property type="protein sequence ID" value="EAL43317.1"/>
    <property type="molecule type" value="Genomic_DNA"/>
</dbReference>
<dbReference type="EMBL" id="M29060">
    <property type="protein sequence ID" value="AAA29109.1"/>
    <property type="molecule type" value="Genomic_DNA"/>
</dbReference>
<dbReference type="PIR" id="C44970">
    <property type="entry name" value="C44970"/>
</dbReference>
<dbReference type="RefSeq" id="XP_648704.1">
    <property type="nucleotide sequence ID" value="XM_643612.1"/>
</dbReference>
<dbReference type="SMR" id="P16877"/>
<dbReference type="STRING" id="5759.C4LVN6"/>
<dbReference type="EnsemblProtists" id="GAT92736">
    <property type="protein sequence ID" value="GAT92736"/>
    <property type="gene ID" value="CL6EHI_186350"/>
</dbReference>
<dbReference type="EnsemblProtists" id="rna_EHI_186350-1">
    <property type="protein sequence ID" value="rna_EHI_186350-1"/>
    <property type="gene ID" value="EHI_186350"/>
</dbReference>
<dbReference type="GeneID" id="3402982"/>
<dbReference type="KEGG" id="ehi:EHI_186350"/>
<dbReference type="VEuPathDB" id="AmoebaDB:EHI5A_248990"/>
<dbReference type="VEuPathDB" id="AmoebaDB:EHI5A_262080"/>
<dbReference type="VEuPathDB" id="AmoebaDB:EHI5A_266680"/>
<dbReference type="VEuPathDB" id="AmoebaDB:EHI5A_267610"/>
<dbReference type="VEuPathDB" id="AmoebaDB:EHI7A_016780"/>
<dbReference type="VEuPathDB" id="AmoebaDB:EHI7A_038990"/>
<dbReference type="VEuPathDB" id="AmoebaDB:EHI8A_037850"/>
<dbReference type="VEuPathDB" id="AmoebaDB:EHI8A_112300"/>
<dbReference type="VEuPathDB" id="AmoebaDB:EHI8A_150200"/>
<dbReference type="VEuPathDB" id="AmoebaDB:EHI_186350"/>
<dbReference type="VEuPathDB" id="AmoebaDB:KM1_039600"/>
<dbReference type="VEuPathDB" id="AmoebaDB:KM1_243070"/>
<dbReference type="VEuPathDB" id="AmoebaDB:KM1_298100"/>
<dbReference type="VEuPathDB" id="AmoebaDB:KM1_312220"/>
<dbReference type="eggNOG" id="KOG0055">
    <property type="taxonomic scope" value="Eukaryota"/>
</dbReference>
<dbReference type="HOGENOM" id="CLU_000604_17_2_1"/>
<dbReference type="OMA" id="QDYWLRW"/>
<dbReference type="OrthoDB" id="6500128at2759"/>
<dbReference type="Proteomes" id="UP000001926">
    <property type="component" value="Partially assembled WGS sequence"/>
</dbReference>
<dbReference type="GO" id="GO:0016020">
    <property type="term" value="C:membrane"/>
    <property type="evidence" value="ECO:0000318"/>
    <property type="project" value="GO_Central"/>
</dbReference>
<dbReference type="GO" id="GO:0140359">
    <property type="term" value="F:ABC-type transporter activity"/>
    <property type="evidence" value="ECO:0007669"/>
    <property type="project" value="InterPro"/>
</dbReference>
<dbReference type="GO" id="GO:0005524">
    <property type="term" value="F:ATP binding"/>
    <property type="evidence" value="ECO:0007669"/>
    <property type="project" value="UniProtKB-KW"/>
</dbReference>
<dbReference type="GO" id="GO:0016887">
    <property type="term" value="F:ATP hydrolysis activity"/>
    <property type="evidence" value="ECO:0007669"/>
    <property type="project" value="InterPro"/>
</dbReference>
<dbReference type="GO" id="GO:0042626">
    <property type="term" value="F:ATPase-coupled transmembrane transporter activity"/>
    <property type="evidence" value="ECO:0000318"/>
    <property type="project" value="GO_Central"/>
</dbReference>
<dbReference type="GO" id="GO:0055085">
    <property type="term" value="P:transmembrane transport"/>
    <property type="evidence" value="ECO:0000318"/>
    <property type="project" value="GO_Central"/>
</dbReference>
<dbReference type="CDD" id="cd18577">
    <property type="entry name" value="ABC_6TM_Pgp_ABCB1_D1_like"/>
    <property type="match status" value="1"/>
</dbReference>
<dbReference type="CDD" id="cd18578">
    <property type="entry name" value="ABC_6TM_Pgp_ABCB1_D2_like"/>
    <property type="match status" value="1"/>
</dbReference>
<dbReference type="CDD" id="cd03249">
    <property type="entry name" value="ABC_MTABC3_MDL1_MDL2"/>
    <property type="match status" value="2"/>
</dbReference>
<dbReference type="FunFam" id="3.40.50.300:FF:000916">
    <property type="entry name" value="ABC transporter B family member 9"/>
    <property type="match status" value="2"/>
</dbReference>
<dbReference type="FunFam" id="1.20.1560.10:FF:000163">
    <property type="entry name" value="ABC transporter B family protein"/>
    <property type="match status" value="1"/>
</dbReference>
<dbReference type="FunFam" id="1.20.1560.10:FF:000018">
    <property type="entry name" value="ATP-binding cassette subfamily B member 11"/>
    <property type="match status" value="1"/>
</dbReference>
<dbReference type="Gene3D" id="1.20.1560.10">
    <property type="entry name" value="ABC transporter type 1, transmembrane domain"/>
    <property type="match status" value="3"/>
</dbReference>
<dbReference type="Gene3D" id="3.40.50.300">
    <property type="entry name" value="P-loop containing nucleotide triphosphate hydrolases"/>
    <property type="match status" value="2"/>
</dbReference>
<dbReference type="InterPro" id="IPR003593">
    <property type="entry name" value="AAA+_ATPase"/>
</dbReference>
<dbReference type="InterPro" id="IPR011527">
    <property type="entry name" value="ABC1_TM_dom"/>
</dbReference>
<dbReference type="InterPro" id="IPR036640">
    <property type="entry name" value="ABC1_TM_sf"/>
</dbReference>
<dbReference type="InterPro" id="IPR003439">
    <property type="entry name" value="ABC_transporter-like_ATP-bd"/>
</dbReference>
<dbReference type="InterPro" id="IPR017871">
    <property type="entry name" value="ABC_transporter-like_CS"/>
</dbReference>
<dbReference type="InterPro" id="IPR027417">
    <property type="entry name" value="P-loop_NTPase"/>
</dbReference>
<dbReference type="InterPro" id="IPR039421">
    <property type="entry name" value="Type_1_exporter"/>
</dbReference>
<dbReference type="PANTHER" id="PTHR43394">
    <property type="entry name" value="ATP-DEPENDENT PERMEASE MDL1, MITOCHONDRIAL"/>
    <property type="match status" value="1"/>
</dbReference>
<dbReference type="PANTHER" id="PTHR43394:SF27">
    <property type="entry name" value="ATP-DEPENDENT TRANSLOCASE ABCB1-LIKE"/>
    <property type="match status" value="1"/>
</dbReference>
<dbReference type="Pfam" id="PF00664">
    <property type="entry name" value="ABC_membrane"/>
    <property type="match status" value="2"/>
</dbReference>
<dbReference type="Pfam" id="PF00005">
    <property type="entry name" value="ABC_tran"/>
    <property type="match status" value="2"/>
</dbReference>
<dbReference type="SMART" id="SM00382">
    <property type="entry name" value="AAA"/>
    <property type="match status" value="2"/>
</dbReference>
<dbReference type="SUPFAM" id="SSF90123">
    <property type="entry name" value="ABC transporter transmembrane region"/>
    <property type="match status" value="2"/>
</dbReference>
<dbReference type="SUPFAM" id="SSF52540">
    <property type="entry name" value="P-loop containing nucleoside triphosphate hydrolases"/>
    <property type="match status" value="2"/>
</dbReference>
<dbReference type="PROSITE" id="PS50929">
    <property type="entry name" value="ABC_TM1F"/>
    <property type="match status" value="2"/>
</dbReference>
<dbReference type="PROSITE" id="PS00211">
    <property type="entry name" value="ABC_TRANSPORTER_1"/>
    <property type="match status" value="2"/>
</dbReference>
<dbReference type="PROSITE" id="PS50893">
    <property type="entry name" value="ABC_TRANSPORTER_2"/>
    <property type="match status" value="2"/>
</dbReference>